<organism>
    <name type="scientific">Buchnera aphidicola subsp. Schizaphis graminum (strain Sg)</name>
    <dbReference type="NCBI Taxonomy" id="198804"/>
    <lineage>
        <taxon>Bacteria</taxon>
        <taxon>Pseudomonadati</taxon>
        <taxon>Pseudomonadota</taxon>
        <taxon>Gammaproteobacteria</taxon>
        <taxon>Enterobacterales</taxon>
        <taxon>Erwiniaceae</taxon>
        <taxon>Buchnera</taxon>
    </lineage>
</organism>
<accession>Q8K909</accession>
<keyword id="KW-0963">Cytoplasm</keyword>
<keyword id="KW-0269">Exonuclease</keyword>
<keyword id="KW-0378">Hydrolase</keyword>
<keyword id="KW-0540">Nuclease</keyword>
<comment type="function">
    <text evidence="1">3'-to-5' exoribonuclease specific for small oligoribonucleotides.</text>
</comment>
<comment type="subcellular location">
    <subcellularLocation>
        <location evidence="1">Cytoplasm</location>
    </subcellularLocation>
</comment>
<comment type="similarity">
    <text evidence="1">Belongs to the oligoribonuclease family.</text>
</comment>
<proteinExistence type="inferred from homology"/>
<dbReference type="EC" id="3.1.15.-" evidence="1"/>
<dbReference type="EMBL" id="AE013218">
    <property type="protein sequence ID" value="AAM68092.1"/>
    <property type="molecule type" value="Genomic_DNA"/>
</dbReference>
<dbReference type="RefSeq" id="WP_011054058.1">
    <property type="nucleotide sequence ID" value="NC_004061.1"/>
</dbReference>
<dbReference type="SMR" id="Q8K909"/>
<dbReference type="STRING" id="198804.BUsg_554"/>
<dbReference type="GeneID" id="93004031"/>
<dbReference type="KEGG" id="bas:BUsg_554"/>
<dbReference type="eggNOG" id="COG1949">
    <property type="taxonomic scope" value="Bacteria"/>
</dbReference>
<dbReference type="HOGENOM" id="CLU_064761_2_0_6"/>
<dbReference type="Proteomes" id="UP000000416">
    <property type="component" value="Chromosome"/>
</dbReference>
<dbReference type="GO" id="GO:0005737">
    <property type="term" value="C:cytoplasm"/>
    <property type="evidence" value="ECO:0007669"/>
    <property type="project" value="UniProtKB-SubCell"/>
</dbReference>
<dbReference type="GO" id="GO:0000175">
    <property type="term" value="F:3'-5'-RNA exonuclease activity"/>
    <property type="evidence" value="ECO:0007669"/>
    <property type="project" value="InterPro"/>
</dbReference>
<dbReference type="GO" id="GO:0003676">
    <property type="term" value="F:nucleic acid binding"/>
    <property type="evidence" value="ECO:0007669"/>
    <property type="project" value="InterPro"/>
</dbReference>
<dbReference type="GO" id="GO:0006259">
    <property type="term" value="P:DNA metabolic process"/>
    <property type="evidence" value="ECO:0007669"/>
    <property type="project" value="UniProtKB-ARBA"/>
</dbReference>
<dbReference type="CDD" id="cd06135">
    <property type="entry name" value="Orn"/>
    <property type="match status" value="1"/>
</dbReference>
<dbReference type="FunFam" id="3.30.420.10:FF:000003">
    <property type="entry name" value="Oligoribonuclease"/>
    <property type="match status" value="1"/>
</dbReference>
<dbReference type="Gene3D" id="3.30.420.10">
    <property type="entry name" value="Ribonuclease H-like superfamily/Ribonuclease H"/>
    <property type="match status" value="1"/>
</dbReference>
<dbReference type="HAMAP" id="MF_00045">
    <property type="entry name" value="Oligoribonuclease"/>
    <property type="match status" value="1"/>
</dbReference>
<dbReference type="InterPro" id="IPR013520">
    <property type="entry name" value="Exonuclease_RNaseT/DNA_pol3"/>
</dbReference>
<dbReference type="InterPro" id="IPR022894">
    <property type="entry name" value="Oligoribonuclease"/>
</dbReference>
<dbReference type="InterPro" id="IPR012337">
    <property type="entry name" value="RNaseH-like_sf"/>
</dbReference>
<dbReference type="InterPro" id="IPR036397">
    <property type="entry name" value="RNaseH_sf"/>
</dbReference>
<dbReference type="NCBIfam" id="NF003765">
    <property type="entry name" value="PRK05359.1"/>
    <property type="match status" value="1"/>
</dbReference>
<dbReference type="PANTHER" id="PTHR11046">
    <property type="entry name" value="OLIGORIBONUCLEASE, MITOCHONDRIAL"/>
    <property type="match status" value="1"/>
</dbReference>
<dbReference type="PANTHER" id="PTHR11046:SF0">
    <property type="entry name" value="OLIGORIBONUCLEASE, MITOCHONDRIAL"/>
    <property type="match status" value="1"/>
</dbReference>
<dbReference type="Pfam" id="PF00929">
    <property type="entry name" value="RNase_T"/>
    <property type="match status" value="1"/>
</dbReference>
<dbReference type="SMART" id="SM00479">
    <property type="entry name" value="EXOIII"/>
    <property type="match status" value="1"/>
</dbReference>
<dbReference type="SUPFAM" id="SSF53098">
    <property type="entry name" value="Ribonuclease H-like"/>
    <property type="match status" value="1"/>
</dbReference>
<feature type="chain" id="PRO_0000111023" description="Oligoribonuclease">
    <location>
        <begin position="1"/>
        <end position="184"/>
    </location>
</feature>
<feature type="domain" description="Exonuclease" evidence="1">
    <location>
        <begin position="8"/>
        <end position="169"/>
    </location>
</feature>
<feature type="active site" evidence="1">
    <location>
        <position position="129"/>
    </location>
</feature>
<gene>
    <name evidence="1" type="primary">orn</name>
    <name type="ordered locus">BUsg_554</name>
</gene>
<evidence type="ECO:0000255" key="1">
    <source>
        <dbReference type="HAMAP-Rule" id="MF_00045"/>
    </source>
</evidence>
<sequence length="184" mass="21817">MTINNENLIWIDLEMTGLNSEIHRIIEIATVITDTKLNIISEGPVIAIHQKEEHIVIMDEWNTKIHKKNGLIKRVQKSIYNESKAESKTIFFLKKWVPIQSSPICGNSVYQDRKFLARYMPNLENYFHYRCIDVSTIKELVNRWCPSFKKIKKQNHTALEDIHESIIELNFYKKIFFDTIKYSK</sequence>
<protein>
    <recommendedName>
        <fullName evidence="1">Oligoribonuclease</fullName>
        <ecNumber evidence="1">3.1.15.-</ecNumber>
    </recommendedName>
</protein>
<name>ORN_BUCAP</name>
<reference key="1">
    <citation type="journal article" date="2002" name="Science">
        <title>50 million years of genomic stasis in endosymbiotic bacteria.</title>
        <authorList>
            <person name="Tamas I."/>
            <person name="Klasson L."/>
            <person name="Canbaeck B."/>
            <person name="Naeslund A.K."/>
            <person name="Eriksson A.-S."/>
            <person name="Wernegreen J.J."/>
            <person name="Sandstroem J.P."/>
            <person name="Moran N.A."/>
            <person name="Andersson S.G.E."/>
        </authorList>
    </citation>
    <scope>NUCLEOTIDE SEQUENCE [LARGE SCALE GENOMIC DNA]</scope>
    <source>
        <strain>Sg</strain>
    </source>
</reference>